<evidence type="ECO:0000250" key="1">
    <source>
        <dbReference type="UniProtKB" id="G7JT50"/>
    </source>
</evidence>
<evidence type="ECO:0000255" key="2">
    <source>
        <dbReference type="HAMAP-Rule" id="MF_01841"/>
    </source>
</evidence>
<evidence type="ECO:0000269" key="3">
    <source>
    </source>
</evidence>
<evidence type="ECO:0000305" key="4"/>
<evidence type="ECO:0007744" key="5">
    <source>
        <dbReference type="PDB" id="2JER"/>
    </source>
</evidence>
<evidence type="ECO:0007829" key="6">
    <source>
        <dbReference type="PDB" id="2JER"/>
    </source>
</evidence>
<dbReference type="EC" id="3.5.3.12" evidence="2 3"/>
<dbReference type="EMBL" id="AE016830">
    <property type="protein sequence ID" value="AAO80553.1"/>
    <property type="status" value="ALT_INIT"/>
    <property type="molecule type" value="Genomic_DNA"/>
</dbReference>
<dbReference type="RefSeq" id="NP_814483.2">
    <property type="nucleotide sequence ID" value="NC_004668.1"/>
</dbReference>
<dbReference type="RefSeq" id="WP_002363185.1">
    <property type="nucleotide sequence ID" value="NZ_KE136527.1"/>
</dbReference>
<dbReference type="PDB" id="2JER">
    <property type="method" value="X-ray"/>
    <property type="resolution" value="1.65 A"/>
    <property type="chains" value="A/B/C/D/E/F/G/H=1-365"/>
</dbReference>
<dbReference type="PDBsum" id="2JER"/>
<dbReference type="SMR" id="Q837U5"/>
<dbReference type="STRING" id="226185.EF_0734"/>
<dbReference type="EnsemblBacteria" id="AAO80553">
    <property type="protein sequence ID" value="AAO80553"/>
    <property type="gene ID" value="EF_0734"/>
</dbReference>
<dbReference type="KEGG" id="efa:EF0734"/>
<dbReference type="PATRIC" id="fig|226185.45.peg.2675"/>
<dbReference type="eggNOG" id="COG2957">
    <property type="taxonomic scope" value="Bacteria"/>
</dbReference>
<dbReference type="HOGENOM" id="CLU_037682_0_0_9"/>
<dbReference type="BRENDA" id="3.5.3.12">
    <property type="organism ID" value="2095"/>
</dbReference>
<dbReference type="SABIO-RK" id="Q837U5"/>
<dbReference type="EvolutionaryTrace" id="Q837U5"/>
<dbReference type="Proteomes" id="UP000001415">
    <property type="component" value="Chromosome"/>
</dbReference>
<dbReference type="GO" id="GO:0047632">
    <property type="term" value="F:agmatine deiminase activity"/>
    <property type="evidence" value="ECO:0007669"/>
    <property type="project" value="UniProtKB-UniRule"/>
</dbReference>
<dbReference type="GO" id="GO:0004668">
    <property type="term" value="F:protein-arginine deiminase activity"/>
    <property type="evidence" value="ECO:0007669"/>
    <property type="project" value="InterPro"/>
</dbReference>
<dbReference type="GO" id="GO:0009446">
    <property type="term" value="P:putrescine biosynthetic process"/>
    <property type="evidence" value="ECO:0007669"/>
    <property type="project" value="InterPro"/>
</dbReference>
<dbReference type="Gene3D" id="3.75.10.10">
    <property type="entry name" value="L-arginine/glycine Amidinotransferase, Chain A"/>
    <property type="match status" value="1"/>
</dbReference>
<dbReference type="HAMAP" id="MF_01841">
    <property type="entry name" value="Agmatine_deimin"/>
    <property type="match status" value="1"/>
</dbReference>
<dbReference type="InterPro" id="IPR017754">
    <property type="entry name" value="Agmatine_deiminase"/>
</dbReference>
<dbReference type="InterPro" id="IPR007466">
    <property type="entry name" value="Peptidyl-Arg-deiminase_porph"/>
</dbReference>
<dbReference type="NCBIfam" id="TIGR03380">
    <property type="entry name" value="agmatine_aguA"/>
    <property type="match status" value="1"/>
</dbReference>
<dbReference type="NCBIfam" id="NF010070">
    <property type="entry name" value="PRK13551.1"/>
    <property type="match status" value="1"/>
</dbReference>
<dbReference type="PANTHER" id="PTHR31377">
    <property type="entry name" value="AGMATINE DEIMINASE-RELATED"/>
    <property type="match status" value="1"/>
</dbReference>
<dbReference type="PANTHER" id="PTHR31377:SF0">
    <property type="entry name" value="AGMATINE DEIMINASE-RELATED"/>
    <property type="match status" value="1"/>
</dbReference>
<dbReference type="Pfam" id="PF04371">
    <property type="entry name" value="PAD_porph"/>
    <property type="match status" value="1"/>
</dbReference>
<dbReference type="SUPFAM" id="SSF55909">
    <property type="entry name" value="Pentein"/>
    <property type="match status" value="1"/>
</dbReference>
<name>AGUA_ENTFA</name>
<comment type="catalytic activity">
    <reaction evidence="2 3">
        <text>agmatine + H2O = N-carbamoylputrescine + NH4(+)</text>
        <dbReference type="Rhea" id="RHEA:18037"/>
        <dbReference type="ChEBI" id="CHEBI:15377"/>
        <dbReference type="ChEBI" id="CHEBI:28938"/>
        <dbReference type="ChEBI" id="CHEBI:58145"/>
        <dbReference type="ChEBI" id="CHEBI:58318"/>
        <dbReference type="EC" id="3.5.3.12"/>
    </reaction>
    <physiologicalReaction direction="left-to-right" evidence="3">
        <dbReference type="Rhea" id="RHEA:18038"/>
    </physiologicalReaction>
</comment>
<comment type="subunit">
    <text evidence="3">Tetramer of two homodimers.</text>
</comment>
<comment type="similarity">
    <text evidence="2">Belongs to the agmatine deiminase family.</text>
</comment>
<comment type="sequence caution" evidence="4">
    <conflict type="erroneous initiation">
        <sequence resource="EMBL-CDS" id="AAO80553"/>
    </conflict>
</comment>
<comment type="sequence caution" evidence="4">
    <conflict type="erroneous initiation">
        <sequence resource="EMBL-CDS" id="AAO80553"/>
    </conflict>
    <text>Truncated N-terminus.</text>
</comment>
<reference key="1">
    <citation type="journal article" date="2003" name="Science">
        <title>Role of mobile DNA in the evolution of vancomycin-resistant Enterococcus faecalis.</title>
        <authorList>
            <person name="Paulsen I.T."/>
            <person name="Banerjei L."/>
            <person name="Myers G.S.A."/>
            <person name="Nelson K.E."/>
            <person name="Seshadri R."/>
            <person name="Read T.D."/>
            <person name="Fouts D.E."/>
            <person name="Eisen J.A."/>
            <person name="Gill S.R."/>
            <person name="Heidelberg J.F."/>
            <person name="Tettelin H."/>
            <person name="Dodson R.J."/>
            <person name="Umayam L.A."/>
            <person name="Brinkac L.M."/>
            <person name="Beanan M.J."/>
            <person name="Daugherty S.C."/>
            <person name="DeBoy R.T."/>
            <person name="Durkin S.A."/>
            <person name="Kolonay J.F."/>
            <person name="Madupu R."/>
            <person name="Nelson W.C."/>
            <person name="Vamathevan J.J."/>
            <person name="Tran B."/>
            <person name="Upton J."/>
            <person name="Hansen T."/>
            <person name="Shetty J."/>
            <person name="Khouri H.M."/>
            <person name="Utterback T.R."/>
            <person name="Radune D."/>
            <person name="Ketchum K.A."/>
            <person name="Dougherty B.A."/>
            <person name="Fraser C.M."/>
        </authorList>
    </citation>
    <scope>NUCLEOTIDE SEQUENCE [LARGE SCALE GENOMIC DNA]</scope>
    <source>
        <strain>ATCC 700802 / V583</strain>
    </source>
</reference>
<reference key="2">
    <citation type="journal article" date="2007" name="J. Bacteriol.">
        <title>The gene cluster for agmatine catabolism of Enterococcus faecalis: study of recombinant putrescine transcarbamylase and agmatine deiminase and a snapshot of agmatine deiminase catalyzing its reaction.</title>
        <authorList>
            <person name="Llacer J.L."/>
            <person name="Polo L.M."/>
            <person name="Tavarez S."/>
            <person name="Alarcon B."/>
            <person name="Hilario R."/>
            <person name="Rubio V."/>
        </authorList>
    </citation>
    <scope>X-RAY CRYSTALLOGRAPHY (1.65 ANGSTROMS)</scope>
    <scope>CATALYTIC ACTIVITY</scope>
    <scope>ACTIVE SITE</scope>
    <scope>SUBUNIT</scope>
</reference>
<protein>
    <recommendedName>
        <fullName evidence="2">Putative agmatine deiminase</fullName>
        <ecNumber evidence="2 3">3.5.3.12</ecNumber>
    </recommendedName>
    <alternativeName>
        <fullName evidence="2">Agmatine iminohydrolase</fullName>
    </alternativeName>
</protein>
<gene>
    <name evidence="2" type="primary">aguA</name>
    <name type="ordered locus">EF_0734</name>
</gene>
<proteinExistence type="evidence at protein level"/>
<sequence>MAKRIVGSTPKQDGFRMPGEFEPQEKVWMIWPERPDNWRDGGKPVQEAFTNVAKAISQFTPMNVVVSQQQFQNCRRQLPPEITVYEMSNNDAWVRDCGPSFVINDHGEIRGVDWTFNAWGGLVDGLYFPWDQDDLVAQKICEIEHVDSYRTDDFVLEGGSFHVDGQGTVLTTEMCLLSEGRNPQLSKEAIEQKLCDYLNVEKVLWLGDGIDPEETNGHVDDVACFIAPGEVACIYTEDQNSPFYEAAQDAYQRLLKMTDAKGRQLKVHKLCCPVKNVTIKGSFKIDFVEGTMPREDGDICIASYMNFLITNDGVIVPQYGDENDHLALEQVQTMFPDKKIVGVNTVEVVYGGGNIHCITQQEPKR</sequence>
<feature type="chain" id="PRO_0000194324" description="Putative agmatine deiminase">
    <location>
        <begin position="1"/>
        <end position="365"/>
    </location>
</feature>
<feature type="active site" description="Amidino-cysteine intermediate" evidence="2 3 5">
    <location>
        <position position="357"/>
    </location>
</feature>
<feature type="binding site" evidence="1">
    <location>
        <position position="214"/>
    </location>
    <ligand>
        <name>agmatine</name>
        <dbReference type="ChEBI" id="CHEBI:58145"/>
    </ligand>
</feature>
<feature type="binding site" evidence="1">
    <location>
        <position position="220"/>
    </location>
    <ligand>
        <name>agmatine</name>
        <dbReference type="ChEBI" id="CHEBI:58145"/>
    </ligand>
</feature>
<feature type="helix" evidence="6">
    <location>
        <begin position="10"/>
        <end position="13"/>
    </location>
</feature>
<feature type="strand" evidence="6">
    <location>
        <begin position="24"/>
        <end position="30"/>
    </location>
</feature>
<feature type="turn" evidence="6">
    <location>
        <begin position="35"/>
        <end position="37"/>
    </location>
</feature>
<feature type="helix" evidence="6">
    <location>
        <begin position="39"/>
        <end position="42"/>
    </location>
</feature>
<feature type="helix" evidence="6">
    <location>
        <begin position="43"/>
        <end position="57"/>
    </location>
</feature>
<feature type="strand" evidence="6">
    <location>
        <begin position="62"/>
        <end position="66"/>
    </location>
</feature>
<feature type="turn" evidence="6">
    <location>
        <begin position="68"/>
        <end position="70"/>
    </location>
</feature>
<feature type="helix" evidence="6">
    <location>
        <begin position="71"/>
        <end position="77"/>
    </location>
</feature>
<feature type="strand" evidence="6">
    <location>
        <begin position="82"/>
        <end position="86"/>
    </location>
</feature>
<feature type="strand" evidence="6">
    <location>
        <begin position="90"/>
        <end position="92"/>
    </location>
</feature>
<feature type="helix" evidence="6">
    <location>
        <begin position="94"/>
        <end position="97"/>
    </location>
</feature>
<feature type="strand" evidence="6">
    <location>
        <begin position="100"/>
        <end position="103"/>
    </location>
</feature>
<feature type="strand" evidence="6">
    <location>
        <begin position="109"/>
        <end position="115"/>
    </location>
</feature>
<feature type="turn" evidence="6">
    <location>
        <begin position="118"/>
        <end position="120"/>
    </location>
</feature>
<feature type="helix" evidence="6">
    <location>
        <begin position="121"/>
        <end position="124"/>
    </location>
</feature>
<feature type="strand" evidence="6">
    <location>
        <begin position="126"/>
        <end position="128"/>
    </location>
</feature>
<feature type="helix" evidence="6">
    <location>
        <begin position="133"/>
        <end position="135"/>
    </location>
</feature>
<feature type="helix" evidence="6">
    <location>
        <begin position="136"/>
        <end position="144"/>
    </location>
</feature>
<feature type="strand" evidence="6">
    <location>
        <begin position="148"/>
        <end position="155"/>
    </location>
</feature>
<feature type="helix" evidence="6">
    <location>
        <begin position="158"/>
        <end position="160"/>
    </location>
</feature>
<feature type="strand" evidence="6">
    <location>
        <begin position="161"/>
        <end position="163"/>
    </location>
</feature>
<feature type="strand" evidence="6">
    <location>
        <begin position="165"/>
        <end position="172"/>
    </location>
</feature>
<feature type="helix" evidence="6">
    <location>
        <begin position="173"/>
        <end position="176"/>
    </location>
</feature>
<feature type="turn" evidence="6">
    <location>
        <begin position="179"/>
        <end position="181"/>
    </location>
</feature>
<feature type="helix" evidence="6">
    <location>
        <begin position="187"/>
        <end position="198"/>
    </location>
</feature>
<feature type="strand" evidence="6">
    <location>
        <begin position="201"/>
        <end position="206"/>
    </location>
</feature>
<feature type="turn" evidence="6">
    <location>
        <begin position="212"/>
        <end position="215"/>
    </location>
</feature>
<feature type="helix" evidence="6">
    <location>
        <begin position="219"/>
        <end position="221"/>
    </location>
</feature>
<feature type="strand" evidence="6">
    <location>
        <begin position="223"/>
        <end position="227"/>
    </location>
</feature>
<feature type="strand" evidence="6">
    <location>
        <begin position="230"/>
        <end position="234"/>
    </location>
</feature>
<feature type="helix" evidence="6">
    <location>
        <begin position="244"/>
        <end position="255"/>
    </location>
</feature>
<feature type="strand" evidence="6">
    <location>
        <begin position="266"/>
        <end position="270"/>
    </location>
</feature>
<feature type="strand" evidence="6">
    <location>
        <begin position="308"/>
        <end position="310"/>
    </location>
</feature>
<feature type="strand" evidence="6">
    <location>
        <begin position="313"/>
        <end position="318"/>
    </location>
</feature>
<feature type="helix" evidence="6">
    <location>
        <begin position="324"/>
        <end position="334"/>
    </location>
</feature>
<feature type="strand" evidence="6">
    <location>
        <begin position="338"/>
        <end position="344"/>
    </location>
</feature>
<feature type="helix" evidence="6">
    <location>
        <begin position="346"/>
        <end position="349"/>
    </location>
</feature>
<feature type="turn" evidence="6">
    <location>
        <begin position="350"/>
        <end position="352"/>
    </location>
</feature>
<feature type="helix" evidence="6">
    <location>
        <begin position="356"/>
        <end position="358"/>
    </location>
</feature>
<feature type="strand" evidence="6">
    <location>
        <begin position="360"/>
        <end position="363"/>
    </location>
</feature>
<keyword id="KW-0002">3D-structure</keyword>
<keyword id="KW-0378">Hydrolase</keyword>
<keyword id="KW-1185">Reference proteome</keyword>
<organism>
    <name type="scientific">Enterococcus faecalis (strain ATCC 700802 / V583)</name>
    <dbReference type="NCBI Taxonomy" id="226185"/>
    <lineage>
        <taxon>Bacteria</taxon>
        <taxon>Bacillati</taxon>
        <taxon>Bacillota</taxon>
        <taxon>Bacilli</taxon>
        <taxon>Lactobacillales</taxon>
        <taxon>Enterococcaceae</taxon>
        <taxon>Enterococcus</taxon>
    </lineage>
</organism>
<accession>Q837U5</accession>